<dbReference type="EMBL" id="CH408032">
    <property type="protein sequence ID" value="EAQ87269.1"/>
    <property type="molecule type" value="Genomic_DNA"/>
</dbReference>
<dbReference type="RefSeq" id="XP_001223102.1">
    <property type="nucleotide sequence ID" value="XM_001223101.1"/>
</dbReference>
<dbReference type="FunCoup" id="Q2H2V8">
    <property type="interactions" value="89"/>
</dbReference>
<dbReference type="STRING" id="306901.Q2H2V8"/>
<dbReference type="GeneID" id="4391596"/>
<dbReference type="VEuPathDB" id="FungiDB:CHGG_03888"/>
<dbReference type="eggNOG" id="KOG0998">
    <property type="taxonomic scope" value="Eukaryota"/>
</dbReference>
<dbReference type="HOGENOM" id="CLU_040829_0_0_1"/>
<dbReference type="InParanoid" id="Q2H2V8"/>
<dbReference type="OMA" id="DWLIPES"/>
<dbReference type="OrthoDB" id="1716625at2759"/>
<dbReference type="Proteomes" id="UP000001056">
    <property type="component" value="Unassembled WGS sequence"/>
</dbReference>
<dbReference type="GO" id="GO:0030479">
    <property type="term" value="C:actin cortical patch"/>
    <property type="evidence" value="ECO:0007669"/>
    <property type="project" value="UniProtKB-SubCell"/>
</dbReference>
<dbReference type="GO" id="GO:0010008">
    <property type="term" value="C:endosome membrane"/>
    <property type="evidence" value="ECO:0007669"/>
    <property type="project" value="UniProtKB-SubCell"/>
</dbReference>
<dbReference type="GO" id="GO:0005886">
    <property type="term" value="C:plasma membrane"/>
    <property type="evidence" value="ECO:0007669"/>
    <property type="project" value="UniProtKB-SubCell"/>
</dbReference>
<dbReference type="GO" id="GO:0003779">
    <property type="term" value="F:actin binding"/>
    <property type="evidence" value="ECO:0007669"/>
    <property type="project" value="UniProtKB-KW"/>
</dbReference>
<dbReference type="GO" id="GO:0005509">
    <property type="term" value="F:calcium ion binding"/>
    <property type="evidence" value="ECO:0007669"/>
    <property type="project" value="InterPro"/>
</dbReference>
<dbReference type="GO" id="GO:0007015">
    <property type="term" value="P:actin filament organization"/>
    <property type="evidence" value="ECO:0007669"/>
    <property type="project" value="InterPro"/>
</dbReference>
<dbReference type="GO" id="GO:0006897">
    <property type="term" value="P:endocytosis"/>
    <property type="evidence" value="ECO:0007669"/>
    <property type="project" value="UniProtKB-KW"/>
</dbReference>
<dbReference type="GO" id="GO:0016197">
    <property type="term" value="P:endosomal transport"/>
    <property type="evidence" value="ECO:0007669"/>
    <property type="project" value="TreeGrafter"/>
</dbReference>
<dbReference type="CDD" id="cd00052">
    <property type="entry name" value="EH"/>
    <property type="match status" value="1"/>
</dbReference>
<dbReference type="FunFam" id="1.10.238.10:FF:000339">
    <property type="entry name" value="Actin cytoskeleton-regulatory complex protein END3"/>
    <property type="match status" value="1"/>
</dbReference>
<dbReference type="Gene3D" id="1.10.238.10">
    <property type="entry name" value="EF-hand"/>
    <property type="match status" value="2"/>
</dbReference>
<dbReference type="InterPro" id="IPR011992">
    <property type="entry name" value="EF-hand-dom_pair"/>
</dbReference>
<dbReference type="InterPro" id="IPR018247">
    <property type="entry name" value="EF_Hand_1_Ca_BS"/>
</dbReference>
<dbReference type="InterPro" id="IPR002048">
    <property type="entry name" value="EF_hand_dom"/>
</dbReference>
<dbReference type="InterPro" id="IPR000261">
    <property type="entry name" value="EH_dom"/>
</dbReference>
<dbReference type="InterPro" id="IPR025604">
    <property type="entry name" value="End3"/>
</dbReference>
<dbReference type="PANTHER" id="PTHR11216:SF74">
    <property type="entry name" value="ACTIN CYTOSKELETON-REGULATORY COMPLEX PROTEIN END3"/>
    <property type="match status" value="1"/>
</dbReference>
<dbReference type="PANTHER" id="PTHR11216">
    <property type="entry name" value="EH DOMAIN"/>
    <property type="match status" value="1"/>
</dbReference>
<dbReference type="Pfam" id="PF12763">
    <property type="entry name" value="EH"/>
    <property type="match status" value="1"/>
</dbReference>
<dbReference type="Pfam" id="PF12761">
    <property type="entry name" value="End3"/>
    <property type="match status" value="1"/>
</dbReference>
<dbReference type="SMART" id="SM00054">
    <property type="entry name" value="EFh"/>
    <property type="match status" value="1"/>
</dbReference>
<dbReference type="SMART" id="SM00027">
    <property type="entry name" value="EH"/>
    <property type="match status" value="2"/>
</dbReference>
<dbReference type="SUPFAM" id="SSF47473">
    <property type="entry name" value="EF-hand"/>
    <property type="match status" value="2"/>
</dbReference>
<dbReference type="PROSITE" id="PS00018">
    <property type="entry name" value="EF_HAND_1"/>
    <property type="match status" value="1"/>
</dbReference>
<dbReference type="PROSITE" id="PS50222">
    <property type="entry name" value="EF_HAND_2"/>
    <property type="match status" value="1"/>
</dbReference>
<dbReference type="PROSITE" id="PS50031">
    <property type="entry name" value="EH"/>
    <property type="match status" value="2"/>
</dbReference>
<proteinExistence type="inferred from homology"/>
<reference key="1">
    <citation type="journal article" date="2015" name="Genome Announc.">
        <title>Draft genome sequence of the cellulolytic fungus Chaetomium globosum.</title>
        <authorList>
            <person name="Cuomo C.A."/>
            <person name="Untereiner W.A."/>
            <person name="Ma L.-J."/>
            <person name="Grabherr M."/>
            <person name="Birren B.W."/>
        </authorList>
    </citation>
    <scope>NUCLEOTIDE SEQUENCE [LARGE SCALE GENOMIC DNA]</scope>
    <source>
        <strain>ATCC 6205 / CBS 148.51 / DSM 1962 / NBRC 6347 / NRRL 1970</strain>
    </source>
</reference>
<organism>
    <name type="scientific">Chaetomium globosum (strain ATCC 6205 / CBS 148.51 / DSM 1962 / NBRC 6347 / NRRL 1970)</name>
    <name type="common">Soil fungus</name>
    <dbReference type="NCBI Taxonomy" id="306901"/>
    <lineage>
        <taxon>Eukaryota</taxon>
        <taxon>Fungi</taxon>
        <taxon>Dikarya</taxon>
        <taxon>Ascomycota</taxon>
        <taxon>Pezizomycotina</taxon>
        <taxon>Sordariomycetes</taxon>
        <taxon>Sordariomycetidae</taxon>
        <taxon>Sordariales</taxon>
        <taxon>Chaetomiaceae</taxon>
        <taxon>Chaetomium</taxon>
    </lineage>
</organism>
<feature type="chain" id="PRO_0000349445" description="Actin cytoskeleton-regulatory complex protein END3">
    <location>
        <begin position="1"/>
        <end position="402"/>
    </location>
</feature>
<feature type="domain" description="EH 1" evidence="3">
    <location>
        <begin position="9"/>
        <end position="99"/>
    </location>
</feature>
<feature type="domain" description="EF-hand" evidence="4">
    <location>
        <begin position="41"/>
        <end position="76"/>
    </location>
</feature>
<feature type="domain" description="EH 2" evidence="3">
    <location>
        <begin position="138"/>
        <end position="226"/>
    </location>
</feature>
<feature type="coiled-coil region" evidence="2">
    <location>
        <begin position="285"/>
        <end position="401"/>
    </location>
</feature>
<feature type="binding site" evidence="4">
    <location>
        <position position="54"/>
    </location>
    <ligand>
        <name>Ca(2+)</name>
        <dbReference type="ChEBI" id="CHEBI:29108"/>
    </ligand>
</feature>
<feature type="binding site" evidence="4">
    <location>
        <position position="56"/>
    </location>
    <ligand>
        <name>Ca(2+)</name>
        <dbReference type="ChEBI" id="CHEBI:29108"/>
    </ligand>
</feature>
<feature type="binding site" evidence="4">
    <location>
        <position position="58"/>
    </location>
    <ligand>
        <name>Ca(2+)</name>
        <dbReference type="ChEBI" id="CHEBI:29108"/>
    </ligand>
</feature>
<feature type="binding site" evidence="4">
    <location>
        <position position="60"/>
    </location>
    <ligand>
        <name>Ca(2+)</name>
        <dbReference type="ChEBI" id="CHEBI:29108"/>
    </ligand>
</feature>
<feature type="binding site" evidence="4">
    <location>
        <position position="65"/>
    </location>
    <ligand>
        <name>Ca(2+)</name>
        <dbReference type="ChEBI" id="CHEBI:29108"/>
    </ligand>
</feature>
<gene>
    <name type="primary">END3</name>
    <name type="ORF">CHGG_03888</name>
</gene>
<sequence length="402" mass="45363">MAPRIEAQEIETYWNIFSTRTNGGKFLNGEQAAPVLKNSGLRDDQLERVWDLADVDNDGNLDFEEFCVAMRVIFDLLNGEYADVPTTLPDWLVPESKAHLVQANRALTGKAVQFEQVEDEDDSPGLKDGFDWYMSPADKAKYEQIYQENRDMRGEVAFSALQDLYESLEVPDTDIRSAWNLINPSAGSSINKDACLAFLHILNNRHEGFRIPRTVPASLRASFERNQIDYQIDSARNNAAAQSRWATRADDETSTGRKAKFGDQYLTRLGRSGFKSAGTDFSSGAKTDAEWEEVRLKKQLAELDEKMAKVEAGVERRKGGQRDSKPALVKRELDQLLDYKRKQLRELEEGGGAAKAGGNLKSVGEDLQTVREQVEGLEGHLRSRQEVLEQLRREIEDERAGR</sequence>
<evidence type="ECO:0000250" key="1"/>
<evidence type="ECO:0000255" key="2"/>
<evidence type="ECO:0000255" key="3">
    <source>
        <dbReference type="PROSITE-ProRule" id="PRU00077"/>
    </source>
</evidence>
<evidence type="ECO:0000255" key="4">
    <source>
        <dbReference type="PROSITE-ProRule" id="PRU00448"/>
    </source>
</evidence>
<evidence type="ECO:0000305" key="5"/>
<comment type="function">
    <text evidence="1">Component of the PAN1 actin cytoskeleton-regulatory complex required for the internalization of endosomes during actin-coupled endocytosis. The complex links the site of endocytosis to the cell membrane-associated actin cytoskeleton. Mediates uptake of external molecules and vacuolar degradation of plasma membrane proteins. Plays a role in the proper organization of the cell membrane-associated actin cytoskeleton and promotes its destabilization (By similarity).</text>
</comment>
<comment type="subunit">
    <text evidence="1">Component of the PAN1 actin cytoskeleton-regulatory complex.</text>
</comment>
<comment type="subcellular location">
    <subcellularLocation>
        <location evidence="1">Cell membrane</location>
        <topology evidence="1">Peripheral membrane protein</topology>
        <orientation evidence="1">Cytoplasmic side</orientation>
    </subcellularLocation>
    <subcellularLocation>
        <location evidence="1">Endosome membrane</location>
        <topology evidence="1">Peripheral membrane protein</topology>
        <orientation evidence="1">Cytoplasmic side</orientation>
    </subcellularLocation>
    <subcellularLocation>
        <location evidence="1">Cytoplasm</location>
        <location evidence="1">Cytoskeleton</location>
        <location evidence="1">Actin patch</location>
    </subcellularLocation>
    <text evidence="1">Cytoplasmic and cortical actin patches.</text>
</comment>
<comment type="similarity">
    <text evidence="5">Belongs to the END3 family.</text>
</comment>
<keyword id="KW-0009">Actin-binding</keyword>
<keyword id="KW-0106">Calcium</keyword>
<keyword id="KW-1003">Cell membrane</keyword>
<keyword id="KW-0175">Coiled coil</keyword>
<keyword id="KW-0963">Cytoplasm</keyword>
<keyword id="KW-0206">Cytoskeleton</keyword>
<keyword id="KW-0254">Endocytosis</keyword>
<keyword id="KW-0967">Endosome</keyword>
<keyword id="KW-0472">Membrane</keyword>
<keyword id="KW-0479">Metal-binding</keyword>
<keyword id="KW-1185">Reference proteome</keyword>
<keyword id="KW-0677">Repeat</keyword>
<accession>Q2H2V8</accession>
<name>END3_CHAGB</name>
<protein>
    <recommendedName>
        <fullName>Actin cytoskeleton-regulatory complex protein END3</fullName>
    </recommendedName>
    <alternativeName>
        <fullName>Endocytosis protein 3</fullName>
    </alternativeName>
</protein>